<feature type="chain" id="PRO_0000459694" description="N-terminal histidine N-methyltransferase">
    <location>
        <begin position="1"/>
        <end position="558"/>
    </location>
</feature>
<feature type="topological domain" description="Cytoplasmic" evidence="5">
    <location>
        <begin position="1"/>
        <end position="15"/>
    </location>
</feature>
<feature type="transmembrane region" description="Helical" evidence="1 5">
    <location>
        <begin position="16"/>
        <end position="32"/>
    </location>
</feature>
<feature type="topological domain" description="Lumenal" evidence="5">
    <location>
        <begin position="33"/>
        <end position="49"/>
    </location>
</feature>
<feature type="transmembrane region" description="Helical" evidence="1 5">
    <location>
        <begin position="50"/>
        <end position="65"/>
    </location>
</feature>
<feature type="topological domain" description="Cytoplasmic" evidence="5">
    <location>
        <begin position="66"/>
        <end position="77"/>
    </location>
</feature>
<feature type="transmembrane region" description="Helical" evidence="1 5">
    <location>
        <begin position="78"/>
        <end position="96"/>
    </location>
</feature>
<feature type="topological domain" description="Lumenal" evidence="5">
    <location>
        <begin position="97"/>
        <end position="104"/>
    </location>
</feature>
<feature type="transmembrane region" description="Helical" evidence="1 5">
    <location>
        <begin position="105"/>
        <end position="131"/>
    </location>
</feature>
<feature type="topological domain" description="Cytoplasmic" evidence="5">
    <location>
        <begin position="132"/>
        <end position="145"/>
    </location>
</feature>
<feature type="transmembrane region" description="Helical" evidence="1 5">
    <location>
        <begin position="146"/>
        <end position="169"/>
    </location>
</feature>
<feature type="topological domain" description="Lumenal" evidence="5">
    <location>
        <begin position="170"/>
        <end position="172"/>
    </location>
</feature>
<feature type="transmembrane region" description="Helical" evidence="5">
    <location>
        <begin position="173"/>
        <end position="194"/>
    </location>
</feature>
<feature type="topological domain" description="Cytoplasmic" evidence="5">
    <location>
        <begin position="195"/>
        <end position="197"/>
    </location>
</feature>
<feature type="transmembrane region" description="Helical" evidence="5">
    <location>
        <begin position="198"/>
        <end position="215"/>
    </location>
</feature>
<feature type="topological domain" description="Lumenal" evidence="5">
    <location>
        <begin position="216"/>
        <end position="558"/>
    </location>
</feature>
<feature type="mutagenesis site" description="Abolishes catalytic activity." evidence="2">
    <original>E</original>
    <variation>A</variation>
    <location>
        <position position="340"/>
    </location>
</feature>
<sequence length="558" mass="61005">MAPFRSIYEKDATKKLVVGAALLVLAAFYSYVFLLTLAPVYGSTPSHIFHGYGVGIAGVAGWFSKDIVDRVSGRKAIYAIPVLAFFLPVVQYFVSQQSSALGNPAGPIFTEVLALYPLVLLSVACAGKLVQAGLNLQRHGDLVAEHIPLLGSYVIYSAGEHLIKAFLSRFIGSTVLLSRAGLQILIAIFYAAAVPSKALLLAIPAFLFSVTSNTHLPLGHTTTALNNIIADDGFALVARQDSTTGYISVLDNLEDGFRVMRCDHSLLGGQWIKKRPNYTPPAVKDPIYAVFTMLEAVRLVETAHGIPRADAGSNALVIGLGIGTTPGALISHGIDTTIVEIDPVVHKYALQYFDLPENHTPIIEDARAFVQRSRNAPQPKQYDYIVHDVFTGGAEPVELFTYEFISGLHALLKDDGVIAINYAGDISLYSTALSIRTIKSIFPTCRLFREAAAPEIGPDFTNMVIFCTKSRGAPITFRDPVPEDFLGSRFRSRYLVPKHEVDAAQFDNVGLEDGPQGHGRRVLVDKEVGRLHKYQDRSALEHWGIMRTVLPDRVWEGW</sequence>
<evidence type="ECO:0000255" key="1"/>
<evidence type="ECO:0000269" key="2">
    <source>
    </source>
</evidence>
<evidence type="ECO:0000303" key="3">
    <source>
    </source>
</evidence>
<evidence type="ECO:0000305" key="4"/>
<evidence type="ECO:0000305" key="5">
    <source>
    </source>
</evidence>
<name>NHMT_EMENI</name>
<keyword id="KW-0256">Endoplasmic reticulum</keyword>
<keyword id="KW-0472">Membrane</keyword>
<keyword id="KW-0489">Methyltransferase</keyword>
<keyword id="KW-1185">Reference proteome</keyword>
<keyword id="KW-0808">Transferase</keyword>
<keyword id="KW-0812">Transmembrane</keyword>
<keyword id="KW-1133">Transmembrane helix</keyword>
<gene>
    <name evidence="3" type="primary">nhmT</name>
    <name type="ORF">AN4663</name>
    <name type="ORF">ANIA_04663</name>
</gene>
<reference key="1">
    <citation type="journal article" date="2005" name="Nature">
        <title>Sequencing of Aspergillus nidulans and comparative analysis with A. fumigatus and A. oryzae.</title>
        <authorList>
            <person name="Galagan J.E."/>
            <person name="Calvo S.E."/>
            <person name="Cuomo C."/>
            <person name="Ma L.-J."/>
            <person name="Wortman J.R."/>
            <person name="Batzoglou S."/>
            <person name="Lee S.-I."/>
            <person name="Bastuerkmen M."/>
            <person name="Spevak C.C."/>
            <person name="Clutterbuck J."/>
            <person name="Kapitonov V."/>
            <person name="Jurka J."/>
            <person name="Scazzocchio C."/>
            <person name="Farman M.L."/>
            <person name="Butler J."/>
            <person name="Purcell S."/>
            <person name="Harris S."/>
            <person name="Braus G.H."/>
            <person name="Draht O."/>
            <person name="Busch S."/>
            <person name="D'Enfert C."/>
            <person name="Bouchier C."/>
            <person name="Goldman G.H."/>
            <person name="Bell-Pedersen D."/>
            <person name="Griffiths-Jones S."/>
            <person name="Doonan J.H."/>
            <person name="Yu J."/>
            <person name="Vienken K."/>
            <person name="Pain A."/>
            <person name="Freitag M."/>
            <person name="Selker E.U."/>
            <person name="Archer D.B."/>
            <person name="Penalva M.A."/>
            <person name="Oakley B.R."/>
            <person name="Momany M."/>
            <person name="Tanaka T."/>
            <person name="Kumagai T."/>
            <person name="Asai K."/>
            <person name="Machida M."/>
            <person name="Nierman W.C."/>
            <person name="Denning D.W."/>
            <person name="Caddick M.X."/>
            <person name="Hynes M."/>
            <person name="Paoletti M."/>
            <person name="Fischer R."/>
            <person name="Miller B.L."/>
            <person name="Dyer P.S."/>
            <person name="Sachs M.S."/>
            <person name="Osmani S.A."/>
            <person name="Birren B.W."/>
        </authorList>
    </citation>
    <scope>NUCLEOTIDE SEQUENCE [LARGE SCALE GENOMIC DNA]</scope>
    <source>
        <strain>FGSC A4 / ATCC 38163 / CBS 112.46 / NRRL 194 / M139</strain>
    </source>
</reference>
<reference key="2">
    <citation type="journal article" date="2009" name="Fungal Genet. Biol.">
        <title>The 2008 update of the Aspergillus nidulans genome annotation: a community effort.</title>
        <authorList>
            <person name="Wortman J.R."/>
            <person name="Gilsenan J.M."/>
            <person name="Joardar V."/>
            <person name="Deegan J."/>
            <person name="Clutterbuck J."/>
            <person name="Andersen M.R."/>
            <person name="Archer D."/>
            <person name="Bencina M."/>
            <person name="Braus G."/>
            <person name="Coutinho P."/>
            <person name="von Dohren H."/>
            <person name="Doonan J."/>
            <person name="Driessen A.J."/>
            <person name="Durek P."/>
            <person name="Espeso E."/>
            <person name="Fekete E."/>
            <person name="Flipphi M."/>
            <person name="Estrada C.G."/>
            <person name="Geysens S."/>
            <person name="Goldman G."/>
            <person name="de Groot P.W."/>
            <person name="Hansen K."/>
            <person name="Harris S.D."/>
            <person name="Heinekamp T."/>
            <person name="Helmstaedt K."/>
            <person name="Henrissat B."/>
            <person name="Hofmann G."/>
            <person name="Homan T."/>
            <person name="Horio T."/>
            <person name="Horiuchi H."/>
            <person name="James S."/>
            <person name="Jones M."/>
            <person name="Karaffa L."/>
            <person name="Karanyi Z."/>
            <person name="Kato M."/>
            <person name="Keller N."/>
            <person name="Kelly D.E."/>
            <person name="Kiel J.A."/>
            <person name="Kim J.M."/>
            <person name="van der Klei I.J."/>
            <person name="Klis F.M."/>
            <person name="Kovalchuk A."/>
            <person name="Krasevec N."/>
            <person name="Kubicek C.P."/>
            <person name="Liu B."/>
            <person name="Maccabe A."/>
            <person name="Meyer V."/>
            <person name="Mirabito P."/>
            <person name="Miskei M."/>
            <person name="Mos M."/>
            <person name="Mullins J."/>
            <person name="Nelson D.R."/>
            <person name="Nielsen J."/>
            <person name="Oakley B.R."/>
            <person name="Osmani S.A."/>
            <person name="Pakula T."/>
            <person name="Paszewski A."/>
            <person name="Paulsen I."/>
            <person name="Pilsyk S."/>
            <person name="Pocsi I."/>
            <person name="Punt P.J."/>
            <person name="Ram A.F."/>
            <person name="Ren Q."/>
            <person name="Robellet X."/>
            <person name="Robson G."/>
            <person name="Seiboth B."/>
            <person name="van Solingen P."/>
            <person name="Specht T."/>
            <person name="Sun J."/>
            <person name="Taheri-Talesh N."/>
            <person name="Takeshita N."/>
            <person name="Ussery D."/>
            <person name="vanKuyk P.A."/>
            <person name="Visser H."/>
            <person name="van de Vondervoort P.J."/>
            <person name="de Vries R.P."/>
            <person name="Walton J."/>
            <person name="Xiang X."/>
            <person name="Xiong Y."/>
            <person name="Zeng A.P."/>
            <person name="Brandt B.W."/>
            <person name="Cornell M.J."/>
            <person name="van den Hondel C.A."/>
            <person name="Visser J."/>
            <person name="Oliver S.G."/>
            <person name="Turner G."/>
        </authorList>
    </citation>
    <scope>GENOME REANNOTATION</scope>
    <source>
        <strain>FGSC A4 / ATCC 38163 / CBS 112.46 / NRRL 194 / M139</strain>
    </source>
</reference>
<reference key="3">
    <citation type="journal article" date="2023" name="Nat. Commun.">
        <title>A seven-transmembrane methyltransferase catalysing N-terminal histidine methylation of lytic polysaccharide monooxygenases.</title>
        <authorList>
            <person name="Batth T.S."/>
            <person name="Simonsen J.L."/>
            <person name="Hernandez-Rollan C."/>
            <person name="Brander S."/>
            <person name="Morth J.P."/>
            <person name="Johansen K.S."/>
            <person name="Noerholm M.H.H."/>
            <person name="Hoof J.B."/>
            <person name="Olsen J.V."/>
        </authorList>
    </citation>
    <scope>FUNCTION</scope>
    <scope>CATALYTIC ACTIVITY</scope>
    <scope>DISRUPTION PHENOTYPE</scope>
    <scope>SUBCELLULAR LOCATION</scope>
    <scope>DOMAIN</scope>
    <scope>MUTAGENESIS OF GLU-340</scope>
</reference>
<proteinExistence type="evidence at protein level"/>
<accession>Q5B467</accession>
<accession>C8VB16</accession>
<comment type="function">
    <text evidence="2">Protein-histidine N-methyltransferase that specifically mediates 3-methylhistidine (tele-methylhistidine) methylation at 'His-1', which protects the side-chain from oxidative damage (PubMed:37452022). Methylates lytic polysaccharide monooxygenases (LPMOs) destined for secretion, including AN4702 (PubMed:37452022).</text>
</comment>
<comment type="catalytic activity">
    <reaction evidence="2">
        <text>L-histidyl-[protein] + S-adenosyl-L-methionine = N(tele)-methyl-L-histidyl-[protein] + S-adenosyl-L-homocysteine + H(+)</text>
        <dbReference type="Rhea" id="RHEA:19369"/>
        <dbReference type="Rhea" id="RHEA-COMP:9745"/>
        <dbReference type="Rhea" id="RHEA-COMP:11600"/>
        <dbReference type="ChEBI" id="CHEBI:15378"/>
        <dbReference type="ChEBI" id="CHEBI:16367"/>
        <dbReference type="ChEBI" id="CHEBI:29979"/>
        <dbReference type="ChEBI" id="CHEBI:57856"/>
        <dbReference type="ChEBI" id="CHEBI:59789"/>
        <dbReference type="EC" id="2.1.1.85"/>
    </reaction>
</comment>
<comment type="subcellular location">
    <subcellularLocation>
        <location evidence="2">Endoplasmic reticulum membrane</location>
        <topology evidence="1">Multi-pass membrane protein</topology>
    </subcellularLocation>
</comment>
<comment type="domain">
    <text evidence="2">Contains an N-terminal seven-transmembrane domain with little structural similarities compared to known membrane proteins and which is required for the NHMTs specific activity in the context of N-terminal histidine methylation of secreted LPMOs.</text>
</comment>
<comment type="disruption phenotype">
    <text evidence="2">Abolished N-terminal histidine methylation on the lytic polysaccharide monooxygenases (LPMOs).</text>
</comment>
<comment type="similarity">
    <text evidence="4">Belongs to the methyltransferase superfamily.</text>
</comment>
<dbReference type="EC" id="2.1.1.85" evidence="2"/>
<dbReference type="EMBL" id="BN001303">
    <property type="protein sequence ID" value="CBF77046.1"/>
    <property type="molecule type" value="Genomic_DNA"/>
</dbReference>
<dbReference type="RefSeq" id="XP_662267.1">
    <property type="nucleotide sequence ID" value="XM_657175.1"/>
</dbReference>
<dbReference type="SMR" id="Q5B467"/>
<dbReference type="EnsemblFungi" id="CBF77046">
    <property type="protein sequence ID" value="CBF77046"/>
    <property type="gene ID" value="ANIA_04663"/>
</dbReference>
<dbReference type="GeneID" id="2872466"/>
<dbReference type="KEGG" id="ani:ANIA_04663"/>
<dbReference type="VEuPathDB" id="FungiDB:AN4663"/>
<dbReference type="eggNOG" id="ENOG502QTVA">
    <property type="taxonomic scope" value="Eukaryota"/>
</dbReference>
<dbReference type="HOGENOM" id="CLU_017511_2_0_1"/>
<dbReference type="InParanoid" id="Q5B467"/>
<dbReference type="OMA" id="CFIGWAG"/>
<dbReference type="OrthoDB" id="2016285at2759"/>
<dbReference type="Proteomes" id="UP000000560">
    <property type="component" value="Chromosome III"/>
</dbReference>
<dbReference type="GO" id="GO:0005789">
    <property type="term" value="C:endoplasmic reticulum membrane"/>
    <property type="evidence" value="ECO:0007669"/>
    <property type="project" value="UniProtKB-SubCell"/>
</dbReference>
<dbReference type="GO" id="GO:0008168">
    <property type="term" value="F:methyltransferase activity"/>
    <property type="evidence" value="ECO:0007669"/>
    <property type="project" value="UniProtKB-KW"/>
</dbReference>
<dbReference type="GO" id="GO:0032259">
    <property type="term" value="P:methylation"/>
    <property type="evidence" value="ECO:0007669"/>
    <property type="project" value="UniProtKB-KW"/>
</dbReference>
<dbReference type="FunFam" id="3.40.50.150:FF:000288">
    <property type="entry name" value="Spermine/spermidine synthase, putative"/>
    <property type="match status" value="1"/>
</dbReference>
<dbReference type="Gene3D" id="3.40.50.150">
    <property type="entry name" value="Vaccinia Virus protein VP39"/>
    <property type="match status" value="1"/>
</dbReference>
<dbReference type="InterPro" id="IPR051419">
    <property type="entry name" value="Lys/N-term_MeTrsfase_sf"/>
</dbReference>
<dbReference type="InterPro" id="IPR029063">
    <property type="entry name" value="SAM-dependent_MTases_sf"/>
</dbReference>
<dbReference type="NCBIfam" id="NF037959">
    <property type="entry name" value="MFS_SpdSyn"/>
    <property type="match status" value="1"/>
</dbReference>
<dbReference type="PANTHER" id="PTHR12176:SF59">
    <property type="entry name" value="METHYLTRANSFERASE DOMAIN-CONTAINING PROTEIN-RELATED"/>
    <property type="match status" value="1"/>
</dbReference>
<dbReference type="PANTHER" id="PTHR12176">
    <property type="entry name" value="SAM-DEPENDENT METHYLTRANSFERASE SUPERFAMILY PROTEIN"/>
    <property type="match status" value="1"/>
</dbReference>
<dbReference type="Pfam" id="PF01564">
    <property type="entry name" value="Spermine_synth"/>
    <property type="match status" value="1"/>
</dbReference>
<dbReference type="SUPFAM" id="SSF53335">
    <property type="entry name" value="S-adenosyl-L-methionine-dependent methyltransferases"/>
    <property type="match status" value="1"/>
</dbReference>
<organism>
    <name type="scientific">Emericella nidulans (strain FGSC A4 / ATCC 38163 / CBS 112.46 / NRRL 194 / M139)</name>
    <name type="common">Aspergillus nidulans</name>
    <dbReference type="NCBI Taxonomy" id="227321"/>
    <lineage>
        <taxon>Eukaryota</taxon>
        <taxon>Fungi</taxon>
        <taxon>Dikarya</taxon>
        <taxon>Ascomycota</taxon>
        <taxon>Pezizomycotina</taxon>
        <taxon>Eurotiomycetes</taxon>
        <taxon>Eurotiomycetidae</taxon>
        <taxon>Eurotiales</taxon>
        <taxon>Aspergillaceae</taxon>
        <taxon>Aspergillus</taxon>
        <taxon>Aspergillus subgen. Nidulantes</taxon>
    </lineage>
</organism>
<protein>
    <recommendedName>
        <fullName evidence="3">N-terminal histidine N-methyltransferase</fullName>
        <shortName evidence="3">NHMT</shortName>
        <ecNumber evidence="2">2.1.1.85</ecNumber>
    </recommendedName>
    <alternativeName>
        <fullName evidence="4">Protein-L-histidine N-tele-methyltransferase</fullName>
    </alternativeName>
</protein>